<dbReference type="EMBL" id="D00382">
    <property type="protein sequence ID" value="BAA00292.1"/>
    <property type="molecule type" value="Genomic_DNA"/>
</dbReference>
<dbReference type="EMBL" id="AY243312">
    <property type="protein sequence ID" value="AAO89317.1"/>
    <property type="molecule type" value="Genomic_DNA"/>
</dbReference>
<dbReference type="PIR" id="JS0216">
    <property type="entry name" value="WMVZK6"/>
</dbReference>
<dbReference type="RefSeq" id="YP_232920.1">
    <property type="nucleotide sequence ID" value="NC_006998.1"/>
</dbReference>
<dbReference type="SMR" id="P68464"/>
<dbReference type="ESTHER" id="cowvi-M5L">
    <property type="family name" value="Monoglyceridelipase_lysophospholip"/>
</dbReference>
<dbReference type="DNASU" id="3707495"/>
<dbReference type="GeneID" id="3707495"/>
<dbReference type="KEGG" id="vg:3707495"/>
<dbReference type="Proteomes" id="UP000000344">
    <property type="component" value="Genome"/>
</dbReference>
<dbReference type="Gene3D" id="3.40.50.1820">
    <property type="entry name" value="alpha/beta hydrolase"/>
    <property type="match status" value="1"/>
</dbReference>
<dbReference type="InterPro" id="IPR029058">
    <property type="entry name" value="AB_hydrolase_fold"/>
</dbReference>
<dbReference type="InterPro" id="IPR022742">
    <property type="entry name" value="Hydrolase_4"/>
</dbReference>
<dbReference type="InterPro" id="IPR051044">
    <property type="entry name" value="MAG_DAG_Lipase"/>
</dbReference>
<dbReference type="PANTHER" id="PTHR11614">
    <property type="entry name" value="PHOSPHOLIPASE-RELATED"/>
    <property type="match status" value="1"/>
</dbReference>
<dbReference type="Pfam" id="PF12146">
    <property type="entry name" value="Hydrolase_4"/>
    <property type="match status" value="1"/>
</dbReference>
<dbReference type="SUPFAM" id="SSF53474">
    <property type="entry name" value="alpha/beta-Hydrolases"/>
    <property type="match status" value="1"/>
</dbReference>
<gene>
    <name type="ordered locus">VACWR038</name>
    <name type="ORF">K6L</name>
</gene>
<comment type="similarity">
    <text evidence="1">Belongs to the poxviridae K6 protein family.</text>
</comment>
<evidence type="ECO:0000305" key="1"/>
<protein>
    <recommendedName>
        <fullName>Protein K6</fullName>
    </recommendedName>
</protein>
<feature type="chain" id="PRO_0000099606" description="Protein K6">
    <location>
        <begin position="1"/>
        <end position="81"/>
    </location>
</feature>
<organism>
    <name type="scientific">Vaccinia virus (strain Western Reserve)</name>
    <name type="common">VACV</name>
    <name type="synonym">Vaccinia virus (strain WR)</name>
    <dbReference type="NCBI Taxonomy" id="10254"/>
    <lineage>
        <taxon>Viruses</taxon>
        <taxon>Varidnaviria</taxon>
        <taxon>Bamfordvirae</taxon>
        <taxon>Nucleocytoviricota</taxon>
        <taxon>Pokkesviricetes</taxon>
        <taxon>Chitovirales</taxon>
        <taxon>Poxviridae</taxon>
        <taxon>Chordopoxvirinae</taxon>
        <taxon>Orthopoxvirus</taxon>
        <taxon>Vaccinia virus</taxon>
    </lineage>
</organism>
<proteinExistence type="inferred from homology"/>
<keyword id="KW-1185">Reference proteome</keyword>
<reference key="1">
    <citation type="journal article" date="1988" name="J. Gen. Virol.">
        <title>Non-essential genes in the vaccinia virus HindIII K fragment: a gene related to serine protease inhibitors and a gene related to the 37K vaccinia virus major envelope antigen.</title>
        <authorList>
            <person name="Boursnell M.E.G."/>
            <person name="Foulds I.J."/>
            <person name="Campbell J.I."/>
            <person name="Binns M.M."/>
        </authorList>
    </citation>
    <scope>NUCLEOTIDE SEQUENCE [GENOMIC DNA]</scope>
</reference>
<reference key="2">
    <citation type="submission" date="2003-02" db="EMBL/GenBank/DDBJ databases">
        <title>Sequencing of the coding region of Vaccinia-WR to an average 9-fold redundancy and an error rate of 0.16/10kb.</title>
        <authorList>
            <person name="Esposito J.J."/>
            <person name="Frace A.M."/>
            <person name="Sammons S.A."/>
            <person name="Olsen-Rasmussen M."/>
            <person name="Osborne J."/>
            <person name="Wohlhueter R."/>
        </authorList>
    </citation>
    <scope>NUCLEOTIDE SEQUENCE [LARGE SCALE GENOMIC DNA]</scope>
</reference>
<sequence length="81" mass="9097">MSANCMFNLDNDYIYWKPITYPKALVFISHGAGKHSGRYDELAENISSLGILVFSHDHIGHGRSNGEKMMIDDFGTARGNY</sequence>
<organismHost>
    <name type="scientific">Bos taurus</name>
    <name type="common">Bovine</name>
    <dbReference type="NCBI Taxonomy" id="9913"/>
</organismHost>
<name>K6_VACCW</name>
<accession>P68464</accession>
<accession>P18381</accession>
<accession>Q76ZX3</accession>